<protein>
    <recommendedName>
        <fullName evidence="1">Maltose/maltodextrin transport system permease protein MalF</fullName>
    </recommendedName>
</protein>
<keyword id="KW-0997">Cell inner membrane</keyword>
<keyword id="KW-1003">Cell membrane</keyword>
<keyword id="KW-0472">Membrane</keyword>
<keyword id="KW-0762">Sugar transport</keyword>
<keyword id="KW-0812">Transmembrane</keyword>
<keyword id="KW-1133">Transmembrane helix</keyword>
<keyword id="KW-0813">Transport</keyword>
<name>MALF_KLEAE</name>
<feature type="chain" id="PRO_0000060071" description="Maltose/maltodextrin transport system permease protein MalF">
    <location>
        <begin position="1"/>
        <end position="514"/>
    </location>
</feature>
<feature type="topological domain" description="Cytoplasmic" evidence="2">
    <location>
        <begin position="1"/>
        <end position="12"/>
    </location>
</feature>
<feature type="transmembrane region" description="Helical" evidence="3">
    <location>
        <begin position="13"/>
        <end position="35"/>
    </location>
</feature>
<feature type="topological domain" description="Periplasmic" evidence="2">
    <location>
        <begin position="36"/>
        <end position="39"/>
    </location>
</feature>
<feature type="transmembrane region" description="Helical" evidence="3">
    <location>
        <begin position="40"/>
        <end position="57"/>
    </location>
</feature>
<feature type="topological domain" description="Cytoplasmic" evidence="2">
    <location>
        <begin position="58"/>
        <end position="69"/>
    </location>
</feature>
<feature type="transmembrane region" description="Helical" evidence="3">
    <location>
        <begin position="70"/>
        <end position="92"/>
    </location>
</feature>
<feature type="topological domain" description="Periplasmic" evidence="2">
    <location>
        <begin position="93"/>
        <end position="283"/>
    </location>
</feature>
<feature type="transmembrane region" description="Helical" evidence="3">
    <location>
        <begin position="284"/>
        <end position="306"/>
    </location>
</feature>
<feature type="topological domain" description="Cytoplasmic" evidence="2">
    <location>
        <begin position="307"/>
        <end position="318"/>
    </location>
</feature>
<feature type="transmembrane region" description="Helical" evidence="3">
    <location>
        <begin position="319"/>
        <end position="341"/>
    </location>
</feature>
<feature type="topological domain" description="Periplasmic" evidence="2">
    <location>
        <begin position="342"/>
        <end position="369"/>
    </location>
</feature>
<feature type="transmembrane region" description="Helical" evidence="3">
    <location>
        <begin position="370"/>
        <end position="392"/>
    </location>
</feature>
<feature type="topological domain" description="Cytoplasmic" evidence="2">
    <location>
        <begin position="393"/>
        <end position="412"/>
    </location>
</feature>
<feature type="transmembrane region" description="Helical" evidence="3">
    <location>
        <begin position="413"/>
        <end position="435"/>
    </location>
</feature>
<feature type="topological domain" description="Periplasmic" evidence="2">
    <location>
        <begin position="436"/>
        <end position="483"/>
    </location>
</feature>
<feature type="transmembrane region" description="Helical" evidence="3">
    <location>
        <begin position="484"/>
        <end position="506"/>
    </location>
</feature>
<feature type="topological domain" description="Cytoplasmic" evidence="2">
    <location>
        <begin position="507"/>
        <end position="514"/>
    </location>
</feature>
<feature type="domain" description="ABC transmembrane type-1" evidence="3">
    <location>
        <begin position="281"/>
        <end position="505"/>
    </location>
</feature>
<gene>
    <name type="primary">malF</name>
</gene>
<reference key="1">
    <citation type="journal article" date="1989" name="Mol. Gen. Genet.">
        <title>Comparison of sequences from the malB regions of Salmonella typhimurium and Enterobacter aerogenes with Escherichia coli K12: a potential new regulatory site in the interoperonic region.</title>
        <authorList>
            <person name="Dahl M.K."/>
            <person name="Francoz E."/>
            <person name="Saurin W."/>
            <person name="Boos W."/>
            <person name="Manson M.D."/>
            <person name="Hofnung M."/>
        </authorList>
    </citation>
    <scope>NUCLEOTIDE SEQUENCE [GENOMIC DNA]</scope>
</reference>
<evidence type="ECO:0000250" key="1">
    <source>
        <dbReference type="UniProtKB" id="P02916"/>
    </source>
</evidence>
<evidence type="ECO:0000255" key="2"/>
<evidence type="ECO:0000255" key="3">
    <source>
        <dbReference type="PROSITE-ProRule" id="PRU00441"/>
    </source>
</evidence>
<evidence type="ECO:0000305" key="4"/>
<proteinExistence type="inferred from homology"/>
<accession>P18812</accession>
<organism>
    <name type="scientific">Klebsiella aerogenes</name>
    <name type="common">Enterobacter aerogenes</name>
    <dbReference type="NCBI Taxonomy" id="548"/>
    <lineage>
        <taxon>Bacteria</taxon>
        <taxon>Pseudomonadati</taxon>
        <taxon>Pseudomonadota</taxon>
        <taxon>Gammaproteobacteria</taxon>
        <taxon>Enterobacterales</taxon>
        <taxon>Enterobacteriaceae</taxon>
        <taxon>Klebsiella/Raoultella group</taxon>
        <taxon>Klebsiella</taxon>
    </lineage>
</organism>
<sequence length="514" mass="56895">MDAVKKKHWWQSPQLTWSVIGLLCLLVGYLVVLMYAQGEYLFAIMTLILSSVGLYIFSNRKAYAWRYVYPGLAGMGLFVLFPLICTIAIAFTNYSSTNQLTFERAQQVLMDRSFQAGKAYNFSLYPAGDEWQLALTDGESGKNYLSEAFKFGGEQKLALKEADALPQGERANLRVITQNRAALNQLTAVLPDESKVIMSSLRQFSGTQPLYALANDGTLTNNQSGVKYRPNADIGFYQSINADGSWGNEKLSPGYTVTIGWDNFTRVFQDEGIQKPFFAIFVWTVVFSVLTVILTVAVGMVLACLVQWEALKGKAIYRVLLILPYAVPSFISILIFKGLFNQSFGEINMMLSALFGIKPAWFSDPTTARTMIIIVNTWLGYPYMMILCMGLLKAIPDDLYEASAMDGAGPFQNFFKITLPLLIKPLTPLMIASFAFNFNNFVLIQLLTNGGPDRLGTTTPAGYTDLLVSYTYRIAFEGGGGQDFGLAAAIATLIFLLVGALAIVNLKATRMKFD</sequence>
<comment type="function">
    <text evidence="1">Part of the ABC transporter complex MalEFGK involved in maltose/maltodextrin import. Probably responsible for the translocation of the substrate across the membrane.</text>
</comment>
<comment type="subunit">
    <text evidence="1">The complex is composed of two ATP-binding proteins (MalK), two transmembrane proteins (MalG and MalF) and a solute-binding protein (MalE).</text>
</comment>
<comment type="subcellular location">
    <subcellularLocation>
        <location evidence="1">Cell inner membrane</location>
        <topology evidence="1">Multi-pass membrane protein</topology>
    </subcellularLocation>
</comment>
<comment type="similarity">
    <text evidence="4">Belongs to the binding-protein-dependent transport system permease family. MalFG subfamily.</text>
</comment>
<dbReference type="PIR" id="S05332">
    <property type="entry name" value="S05332"/>
</dbReference>
<dbReference type="RefSeq" id="WP_015368773.1">
    <property type="nucleotide sequence ID" value="NZ_WPHE01000008.1"/>
</dbReference>
<dbReference type="SMR" id="P18812"/>
<dbReference type="STRING" id="548.EAG7_03821"/>
<dbReference type="GeneID" id="93309861"/>
<dbReference type="OMA" id="IITQNRQ"/>
<dbReference type="GO" id="GO:1990060">
    <property type="term" value="C:maltose transport complex"/>
    <property type="evidence" value="ECO:0007669"/>
    <property type="project" value="TreeGrafter"/>
</dbReference>
<dbReference type="GO" id="GO:0015423">
    <property type="term" value="F:ABC-type maltose transporter activity"/>
    <property type="evidence" value="ECO:0007669"/>
    <property type="project" value="TreeGrafter"/>
</dbReference>
<dbReference type="GO" id="GO:0042956">
    <property type="term" value="P:maltodextrin transmembrane transport"/>
    <property type="evidence" value="ECO:0007669"/>
    <property type="project" value="TreeGrafter"/>
</dbReference>
<dbReference type="CDD" id="cd06261">
    <property type="entry name" value="TM_PBP2"/>
    <property type="match status" value="1"/>
</dbReference>
<dbReference type="FunFam" id="1.10.3720.10:FF:000030">
    <property type="entry name" value="Maltose ABC transporter permease MalF"/>
    <property type="match status" value="1"/>
</dbReference>
<dbReference type="FunFam" id="1.20.58.370:FF:000001">
    <property type="entry name" value="Maltose ABC transporter permease MalF"/>
    <property type="match status" value="1"/>
</dbReference>
<dbReference type="FunFam" id="2.40.430.10:FF:000001">
    <property type="entry name" value="Maltose ABC transporter permease MalF"/>
    <property type="match status" value="1"/>
</dbReference>
<dbReference type="Gene3D" id="2.40.430.10">
    <property type="entry name" value="D-maltodextrin-binding protein, MBP"/>
    <property type="match status" value="1"/>
</dbReference>
<dbReference type="Gene3D" id="1.20.58.370">
    <property type="entry name" value="MalF N-terminal region-like"/>
    <property type="match status" value="1"/>
</dbReference>
<dbReference type="Gene3D" id="3.10.650.10">
    <property type="entry name" value="MalF N-terminal region-like"/>
    <property type="match status" value="1"/>
</dbReference>
<dbReference type="Gene3D" id="1.10.3720.10">
    <property type="entry name" value="MetI-like"/>
    <property type="match status" value="1"/>
</dbReference>
<dbReference type="InterPro" id="IPR035277">
    <property type="entry name" value="MalF_N"/>
</dbReference>
<dbReference type="InterPro" id="IPR048464">
    <property type="entry name" value="MalF_N_TM"/>
</dbReference>
<dbReference type="InterPro" id="IPR029345">
    <property type="entry name" value="MalF_P2"/>
</dbReference>
<dbReference type="InterPro" id="IPR047103">
    <property type="entry name" value="MalF_P2_sf"/>
</dbReference>
<dbReference type="InterPro" id="IPR000515">
    <property type="entry name" value="MetI-like"/>
</dbReference>
<dbReference type="InterPro" id="IPR035906">
    <property type="entry name" value="MetI-like_sf"/>
</dbReference>
<dbReference type="NCBIfam" id="NF008232">
    <property type="entry name" value="PRK10999.1"/>
    <property type="match status" value="1"/>
</dbReference>
<dbReference type="PANTHER" id="PTHR47314">
    <property type="entry name" value="MALTOSE/MALTODEXTRIN TRANSPORT SYSTEM PERMEASE PROTEIN MALF"/>
    <property type="match status" value="1"/>
</dbReference>
<dbReference type="PANTHER" id="PTHR47314:SF1">
    <property type="entry name" value="MALTOSE_MALTODEXTRIN TRANSPORT SYSTEM PERMEASE PROTEIN MALF"/>
    <property type="match status" value="1"/>
</dbReference>
<dbReference type="Pfam" id="PF00528">
    <property type="entry name" value="BPD_transp_1"/>
    <property type="match status" value="1"/>
</dbReference>
<dbReference type="Pfam" id="PF20872">
    <property type="entry name" value="MalF_N_TM"/>
    <property type="match status" value="1"/>
</dbReference>
<dbReference type="Pfam" id="PF14785">
    <property type="entry name" value="MalF_P2"/>
    <property type="match status" value="1"/>
</dbReference>
<dbReference type="SUPFAM" id="SSF160964">
    <property type="entry name" value="MalF N-terminal region-like"/>
    <property type="match status" value="1"/>
</dbReference>
<dbReference type="SUPFAM" id="SSF161098">
    <property type="entry name" value="MetI-like"/>
    <property type="match status" value="1"/>
</dbReference>
<dbReference type="PROSITE" id="PS50928">
    <property type="entry name" value="ABC_TM1"/>
    <property type="match status" value="1"/>
</dbReference>